<dbReference type="EC" id="6.1.1.14" evidence="1"/>
<dbReference type="EMBL" id="CP000033">
    <property type="protein sequence ID" value="AAV43034.1"/>
    <property type="molecule type" value="Genomic_DNA"/>
</dbReference>
<dbReference type="RefSeq" id="WP_003547620.1">
    <property type="nucleotide sequence ID" value="NC_006814.3"/>
</dbReference>
<dbReference type="RefSeq" id="YP_194065.1">
    <property type="nucleotide sequence ID" value="NC_006814.3"/>
</dbReference>
<dbReference type="SMR" id="Q5FJU0"/>
<dbReference type="STRING" id="272621.LBA1198"/>
<dbReference type="GeneID" id="93289707"/>
<dbReference type="KEGG" id="lac:LBA1198"/>
<dbReference type="PATRIC" id="fig|272621.13.peg.1136"/>
<dbReference type="eggNOG" id="COG0751">
    <property type="taxonomic scope" value="Bacteria"/>
</dbReference>
<dbReference type="HOGENOM" id="CLU_007220_2_2_9"/>
<dbReference type="OrthoDB" id="9775440at2"/>
<dbReference type="BioCyc" id="LACI272621:G1G49-1185-MONOMER"/>
<dbReference type="Proteomes" id="UP000006381">
    <property type="component" value="Chromosome"/>
</dbReference>
<dbReference type="GO" id="GO:0005829">
    <property type="term" value="C:cytosol"/>
    <property type="evidence" value="ECO:0007669"/>
    <property type="project" value="TreeGrafter"/>
</dbReference>
<dbReference type="GO" id="GO:0004814">
    <property type="term" value="F:arginine-tRNA ligase activity"/>
    <property type="evidence" value="ECO:0007669"/>
    <property type="project" value="InterPro"/>
</dbReference>
<dbReference type="GO" id="GO:0005524">
    <property type="term" value="F:ATP binding"/>
    <property type="evidence" value="ECO:0007669"/>
    <property type="project" value="UniProtKB-UniRule"/>
</dbReference>
<dbReference type="GO" id="GO:0004820">
    <property type="term" value="F:glycine-tRNA ligase activity"/>
    <property type="evidence" value="ECO:0007669"/>
    <property type="project" value="UniProtKB-UniRule"/>
</dbReference>
<dbReference type="GO" id="GO:0006420">
    <property type="term" value="P:arginyl-tRNA aminoacylation"/>
    <property type="evidence" value="ECO:0007669"/>
    <property type="project" value="InterPro"/>
</dbReference>
<dbReference type="GO" id="GO:0006426">
    <property type="term" value="P:glycyl-tRNA aminoacylation"/>
    <property type="evidence" value="ECO:0007669"/>
    <property type="project" value="UniProtKB-UniRule"/>
</dbReference>
<dbReference type="HAMAP" id="MF_00255">
    <property type="entry name" value="Gly_tRNA_synth_beta"/>
    <property type="match status" value="1"/>
</dbReference>
<dbReference type="InterPro" id="IPR008909">
    <property type="entry name" value="DALR_anticod-bd"/>
</dbReference>
<dbReference type="InterPro" id="IPR015944">
    <property type="entry name" value="Gly-tRNA-synth_bsu"/>
</dbReference>
<dbReference type="InterPro" id="IPR006194">
    <property type="entry name" value="Gly-tRNA-synth_heterodimer"/>
</dbReference>
<dbReference type="NCBIfam" id="TIGR00211">
    <property type="entry name" value="glyS"/>
    <property type="match status" value="1"/>
</dbReference>
<dbReference type="PANTHER" id="PTHR30075:SF2">
    <property type="entry name" value="GLYCINE--TRNA LIGASE, CHLOROPLASTIC_MITOCHONDRIAL 2"/>
    <property type="match status" value="1"/>
</dbReference>
<dbReference type="PANTHER" id="PTHR30075">
    <property type="entry name" value="GLYCYL-TRNA SYNTHETASE"/>
    <property type="match status" value="1"/>
</dbReference>
<dbReference type="Pfam" id="PF05746">
    <property type="entry name" value="DALR_1"/>
    <property type="match status" value="1"/>
</dbReference>
<dbReference type="Pfam" id="PF02092">
    <property type="entry name" value="tRNA_synt_2f"/>
    <property type="match status" value="1"/>
</dbReference>
<dbReference type="PRINTS" id="PR01045">
    <property type="entry name" value="TRNASYNTHGB"/>
</dbReference>
<dbReference type="SUPFAM" id="SSF109604">
    <property type="entry name" value="HD-domain/PDEase-like"/>
    <property type="match status" value="1"/>
</dbReference>
<dbReference type="PROSITE" id="PS50861">
    <property type="entry name" value="AA_TRNA_LIGASE_II_GLYAB"/>
    <property type="match status" value="1"/>
</dbReference>
<evidence type="ECO:0000255" key="1">
    <source>
        <dbReference type="HAMAP-Rule" id="MF_00255"/>
    </source>
</evidence>
<organism>
    <name type="scientific">Lactobacillus acidophilus (strain ATCC 700396 / NCK56 / N2 / NCFM)</name>
    <dbReference type="NCBI Taxonomy" id="272621"/>
    <lineage>
        <taxon>Bacteria</taxon>
        <taxon>Bacillati</taxon>
        <taxon>Bacillota</taxon>
        <taxon>Bacilli</taxon>
        <taxon>Lactobacillales</taxon>
        <taxon>Lactobacillaceae</taxon>
        <taxon>Lactobacillus</taxon>
    </lineage>
</organism>
<sequence>MAKDYLFEIGTEEMPAHVVPRSVSQLADRTRKFLKENGLKFKDIKTFSTPRRLTILVEDLAEKQDDIDEVKKGPAKKIAQDADGNWTKAAQGFARGQGMTTDDIYFEELKGTEYAYVHVQKEGKKASDILLGMSEIIKAMTFPTKMRWDSNDFEFVRPIHWLVSLFGNEVIPVKILDITAGRKTEGHRFLGDSVVLANADDYEDALKDQYVIANAEERKDMIVNQMDELVKENHWQVKPDRDLLEEVTYLVEYPTVFAGSFDEKYLNIPDEVLITSMKDNQRYFEVYDENGKLINHFIAVRNGNKDYLDNVISGNEKVLVARLDDAQFFYDEDRKYPLSHFVDRLKDVSFHDKIGSMAEKVQRVRMIGDYLAKRWNLPENVVKDFDRASELYKFDLVTQMVGEFAELQGVMGMHYARLAGEDEEVSVAIKEHYMPATAEGPLPETTVGSLLSIADKIDTIITFFGAGMIPTSSNDPYALRRYAYGIVRILLNEKWSLPFNEVLPEIISLLNGVTPARLPKSDVDQEIADFIRDRVKQYLQKNKFKYDIIDAVLASSQQDPSQILAAANVLQLHHDDEEFKPVVESLTRIDNILKKAKFKGNVEVDESLFEDNSEKELYVGVQNLQEIESLADLYQGFVQLQPVIDQYFDVNMIMDKNEKVKNNRLAQLYAVSELADRLGNLSKLVIK</sequence>
<reference key="1">
    <citation type="journal article" date="2005" name="Proc. Natl. Acad. Sci. U.S.A.">
        <title>Complete genome sequence of the probiotic lactic acid bacterium Lactobacillus acidophilus NCFM.</title>
        <authorList>
            <person name="Altermann E."/>
            <person name="Russell W.M."/>
            <person name="Azcarate-Peril M.A."/>
            <person name="Barrangou R."/>
            <person name="Buck B.L."/>
            <person name="McAuliffe O."/>
            <person name="Souther N."/>
            <person name="Dobson A."/>
            <person name="Duong T."/>
            <person name="Callanan M."/>
            <person name="Lick S."/>
            <person name="Hamrick A."/>
            <person name="Cano R."/>
            <person name="Klaenhammer T.R."/>
        </authorList>
    </citation>
    <scope>NUCLEOTIDE SEQUENCE [LARGE SCALE GENOMIC DNA]</scope>
    <source>
        <strain>ATCC 700396 / NCK56 / N2 / NCFM</strain>
    </source>
</reference>
<accession>Q5FJU0</accession>
<comment type="catalytic activity">
    <reaction evidence="1">
        <text>tRNA(Gly) + glycine + ATP = glycyl-tRNA(Gly) + AMP + diphosphate</text>
        <dbReference type="Rhea" id="RHEA:16013"/>
        <dbReference type="Rhea" id="RHEA-COMP:9664"/>
        <dbReference type="Rhea" id="RHEA-COMP:9683"/>
        <dbReference type="ChEBI" id="CHEBI:30616"/>
        <dbReference type="ChEBI" id="CHEBI:33019"/>
        <dbReference type="ChEBI" id="CHEBI:57305"/>
        <dbReference type="ChEBI" id="CHEBI:78442"/>
        <dbReference type="ChEBI" id="CHEBI:78522"/>
        <dbReference type="ChEBI" id="CHEBI:456215"/>
        <dbReference type="EC" id="6.1.1.14"/>
    </reaction>
</comment>
<comment type="subunit">
    <text evidence="1">Tetramer of two alpha and two beta subunits.</text>
</comment>
<comment type="subcellular location">
    <subcellularLocation>
        <location evidence="1">Cytoplasm</location>
    </subcellularLocation>
</comment>
<comment type="similarity">
    <text evidence="1">Belongs to the class-II aminoacyl-tRNA synthetase family.</text>
</comment>
<proteinExistence type="inferred from homology"/>
<protein>
    <recommendedName>
        <fullName evidence="1">Glycine--tRNA ligase beta subunit</fullName>
        <ecNumber evidence="1">6.1.1.14</ecNumber>
    </recommendedName>
    <alternativeName>
        <fullName evidence="1">Glycyl-tRNA synthetase beta subunit</fullName>
        <shortName evidence="1">GlyRS</shortName>
    </alternativeName>
</protein>
<name>SYGB_LACAC</name>
<feature type="chain" id="PRO_1000006371" description="Glycine--tRNA ligase beta subunit">
    <location>
        <begin position="1"/>
        <end position="687"/>
    </location>
</feature>
<keyword id="KW-0030">Aminoacyl-tRNA synthetase</keyword>
<keyword id="KW-0067">ATP-binding</keyword>
<keyword id="KW-0963">Cytoplasm</keyword>
<keyword id="KW-0436">Ligase</keyword>
<keyword id="KW-0547">Nucleotide-binding</keyword>
<keyword id="KW-0648">Protein biosynthesis</keyword>
<keyword id="KW-1185">Reference proteome</keyword>
<gene>
    <name evidence="1" type="primary">glyS</name>
    <name type="ordered locus">LBA1198</name>
</gene>